<protein>
    <recommendedName>
        <fullName evidence="4">Protein SMAX1-like</fullName>
    </recommendedName>
</protein>
<proteinExistence type="inferred from homology"/>
<organism evidence="8">
    <name type="scientific">Oryza sativa subsp. japonica</name>
    <name type="common">Rice</name>
    <dbReference type="NCBI Taxonomy" id="39947"/>
    <lineage>
        <taxon>Eukaryota</taxon>
        <taxon>Viridiplantae</taxon>
        <taxon>Streptophyta</taxon>
        <taxon>Embryophyta</taxon>
        <taxon>Tracheophyta</taxon>
        <taxon>Spermatophyta</taxon>
        <taxon>Magnoliopsida</taxon>
        <taxon>Liliopsida</taxon>
        <taxon>Poales</taxon>
        <taxon>Poaceae</taxon>
        <taxon>BOP clade</taxon>
        <taxon>Oryzoideae</taxon>
        <taxon>Oryzeae</taxon>
        <taxon>Oryzinae</taxon>
        <taxon>Oryza</taxon>
        <taxon>Oryza sativa</taxon>
    </lineage>
</organism>
<evidence type="ECO:0000250" key="1">
    <source>
        <dbReference type="UniProtKB" id="Q9FHH2"/>
    </source>
</evidence>
<evidence type="ECO:0000255" key="2">
    <source>
        <dbReference type="PROSITE-ProRule" id="PRU01251"/>
    </source>
</evidence>
<evidence type="ECO:0000256" key="3">
    <source>
        <dbReference type="SAM" id="MobiDB-lite"/>
    </source>
</evidence>
<evidence type="ECO:0000305" key="4"/>
<evidence type="ECO:0000312" key="5">
    <source>
        <dbReference type="EMBL" id="BAD05509.1"/>
    </source>
</evidence>
<evidence type="ECO:0000312" key="6">
    <source>
        <dbReference type="EMBL" id="BAF23290.1"/>
    </source>
</evidence>
<evidence type="ECO:0000312" key="7">
    <source>
        <dbReference type="EMBL" id="BAT04561.1"/>
    </source>
</evidence>
<evidence type="ECO:0000312" key="8">
    <source>
        <dbReference type="Proteomes" id="UP000059680"/>
    </source>
</evidence>
<keyword id="KW-1185">Reference proteome</keyword>
<keyword id="KW-0677">Repeat</keyword>
<keyword id="KW-0346">Stress response</keyword>
<keyword id="KW-0804">Transcription</keyword>
<keyword id="KW-0805">Transcription regulation</keyword>
<comment type="function">
    <text evidence="1">May act downstream of MAX2 to negatively regulate karrikins/strigolactone responses. Acts probably specifically in the karrikin pathway. May function in a transcriptional corepressor complex.</text>
</comment>
<comment type="similarity">
    <text evidence="4">Belongs to the ClpA/ClpB family.</text>
</comment>
<comment type="sequence caution" evidence="4">
    <conflict type="erroneous initiation">
        <sequence resource="EMBL-CDS" id="BAF23290"/>
    </conflict>
    <text>Truncated N-terminus.</text>
</comment>
<comment type="sequence caution" evidence="4">
    <conflict type="erroneous initiation">
        <sequence resource="EMBL-CDS" id="BAT04561"/>
    </conflict>
    <text>Truncated N-terminus.</text>
</comment>
<comment type="sequence caution" evidence="4">
    <conflict type="erroneous gene model prediction">
        <sequence resource="EMBL-CDS" id="EAZ42061"/>
    </conflict>
</comment>
<sequence length="1041" mass="109247">MRADLSTIQQTLTPEAAAALARAMDEAGRRRHGQTTPLHVAAALLAAPAGLLRQACARAASAAGVGGGGGAAAGAGAGAHPLHCRALELCFSVALDRLPAAAAAAAAAHGAGASPPVSNALVAALKRAQAQQRRGCPEAAQQPLLAVKVELEQLVLSILDDPSVSRVMREASFSSAAVKSIIEQSLSAPSPCPSAAASTTTAGPGPLSPSPSPLPRAGAANAYLNPRLAAAAAVASGGGGGGGDDARKVIDVMLKPTRRNPVLVGDAGPDAVLKEAIRRIPTAGFPALAGAKVLPLEAELAKLAGDKAAMAARIGDLGAVVERLLGEHGGVVLDLGDLKWLVDGPAAAASEGGKAAVAEMGRLLRRFGRAGVWAVCTAACTTYLRCKVYHPGMEAEWDLHAVPIARGGAPIAAAAAGSALRPGGSGILNSSMGMLSPALRPMPVTPTALRWPPPGSDQSPAAKPAMCLLCKGSYERELAKLEAEQTDKPASRPEAAKPGLPHWLQLSNDQNKAKEQELKLKRSKDELERKWRETCARIHSACPMAPALSVPLATFTPRPPVEPKLGVARGAAVPTLKMNPSWEKPSVAPTLELRKSPPASPVKTDLVLCRLDPGTNPAVENEQKESCEGLTALQKAKIAGISDIESFKRLLKGLTEKVSWQSDAASAIAAVVIQCRSGSGKRRNVGTRGDMWLLFVGPDQAGKRKMVNALSELMANTRPVVVNFGGDSRLGRVGNDGPNMGFWGKTALDRVTEAVRQNPFSVIVLEGIDQVDVVVHGKIKRAMETGRLPDSRGREVSLGNVIFVLTTNWVPEELKGSNVETLLRGEERMLESTSSSWQLELSIGDKQVKHRADWLCDDVRPAKLAKELSSSHGLSLDLNLAVGALDDTEGSHNSSDVSVEQEQEKGQLAVKRSTPAPGSDILELVDDAIVFRPVDFTPFRKTVTDCISAKFESVMGSSSSFRIDEDAVDWMVGSVWLTDEKIEDWAEKVLKPSIERLWHNVKHDSGRSIIRLTAVAAKALPRWGGGREGLPVAVTIAIDGM</sequence>
<reference key="1">
    <citation type="journal article" date="2005" name="Nature">
        <title>The map-based sequence of the rice genome.</title>
        <authorList>
            <consortium name="International rice genome sequencing project (IRGSP)"/>
        </authorList>
    </citation>
    <scope>NUCLEOTIDE SEQUENCE [LARGE SCALE GENOMIC DNA]</scope>
    <source>
        <strain>cv. Nipponbare</strain>
    </source>
</reference>
<reference key="2">
    <citation type="journal article" date="2008" name="Nucleic Acids Res.">
        <title>The rice annotation project database (RAP-DB): 2008 update.</title>
        <authorList>
            <consortium name="The rice annotation project (RAP)"/>
        </authorList>
    </citation>
    <scope>GENOME REANNOTATION</scope>
    <source>
        <strain>cv. Nipponbare</strain>
    </source>
</reference>
<reference key="3">
    <citation type="journal article" date="2013" name="Rice">
        <title>Improvement of the Oryza sativa Nipponbare reference genome using next generation sequence and optical map data.</title>
        <authorList>
            <person name="Kawahara Y."/>
            <person name="de la Bastide M."/>
            <person name="Hamilton J.P."/>
            <person name="Kanamori H."/>
            <person name="McCombie W.R."/>
            <person name="Ouyang S."/>
            <person name="Schwartz D.C."/>
            <person name="Tanaka T."/>
            <person name="Wu J."/>
            <person name="Zhou S."/>
            <person name="Childs K.L."/>
            <person name="Davidson R.M."/>
            <person name="Lin H."/>
            <person name="Quesada-Ocampo L."/>
            <person name="Vaillancourt B."/>
            <person name="Sakai H."/>
            <person name="Lee S.S."/>
            <person name="Kim J."/>
            <person name="Numa H."/>
            <person name="Itoh T."/>
            <person name="Buell C.R."/>
            <person name="Matsumoto T."/>
        </authorList>
    </citation>
    <scope>GENOME REANNOTATION</scope>
    <source>
        <strain>cv. Nipponbare</strain>
    </source>
</reference>
<reference key="4">
    <citation type="journal article" date="2005" name="PLoS Biol.">
        <title>The genomes of Oryza sativa: a history of duplications.</title>
        <authorList>
            <person name="Yu J."/>
            <person name="Wang J."/>
            <person name="Lin W."/>
            <person name="Li S."/>
            <person name="Li H."/>
            <person name="Zhou J."/>
            <person name="Ni P."/>
            <person name="Dong W."/>
            <person name="Hu S."/>
            <person name="Zeng C."/>
            <person name="Zhang J."/>
            <person name="Zhang Y."/>
            <person name="Li R."/>
            <person name="Xu Z."/>
            <person name="Li S."/>
            <person name="Li X."/>
            <person name="Zheng H."/>
            <person name="Cong L."/>
            <person name="Lin L."/>
            <person name="Yin J."/>
            <person name="Geng J."/>
            <person name="Li G."/>
            <person name="Shi J."/>
            <person name="Liu J."/>
            <person name="Lv H."/>
            <person name="Li J."/>
            <person name="Wang J."/>
            <person name="Deng Y."/>
            <person name="Ran L."/>
            <person name="Shi X."/>
            <person name="Wang X."/>
            <person name="Wu Q."/>
            <person name="Li C."/>
            <person name="Ren X."/>
            <person name="Wang J."/>
            <person name="Wang X."/>
            <person name="Li D."/>
            <person name="Liu D."/>
            <person name="Zhang X."/>
            <person name="Ji Z."/>
            <person name="Zhao W."/>
            <person name="Sun Y."/>
            <person name="Zhang Z."/>
            <person name="Bao J."/>
            <person name="Han Y."/>
            <person name="Dong L."/>
            <person name="Ji J."/>
            <person name="Chen P."/>
            <person name="Wu S."/>
            <person name="Liu J."/>
            <person name="Xiao Y."/>
            <person name="Bu D."/>
            <person name="Tan J."/>
            <person name="Yang L."/>
            <person name="Ye C."/>
            <person name="Zhang J."/>
            <person name="Xu J."/>
            <person name="Zhou Y."/>
            <person name="Yu Y."/>
            <person name="Zhang B."/>
            <person name="Zhuang S."/>
            <person name="Wei H."/>
            <person name="Liu B."/>
            <person name="Lei M."/>
            <person name="Yu H."/>
            <person name="Li Y."/>
            <person name="Xu H."/>
            <person name="Wei S."/>
            <person name="He X."/>
            <person name="Fang L."/>
            <person name="Zhang Z."/>
            <person name="Zhang Y."/>
            <person name="Huang X."/>
            <person name="Su Z."/>
            <person name="Tong W."/>
            <person name="Li J."/>
            <person name="Tong Z."/>
            <person name="Li S."/>
            <person name="Ye J."/>
            <person name="Wang L."/>
            <person name="Fang L."/>
            <person name="Lei T."/>
            <person name="Chen C.-S."/>
            <person name="Chen H.-C."/>
            <person name="Xu Z."/>
            <person name="Li H."/>
            <person name="Huang H."/>
            <person name="Zhang F."/>
            <person name="Xu H."/>
            <person name="Li N."/>
            <person name="Zhao C."/>
            <person name="Li S."/>
            <person name="Dong L."/>
            <person name="Huang Y."/>
            <person name="Li L."/>
            <person name="Xi Y."/>
            <person name="Qi Q."/>
            <person name="Li W."/>
            <person name="Zhang B."/>
            <person name="Hu W."/>
            <person name="Zhang Y."/>
            <person name="Tian X."/>
            <person name="Jiao Y."/>
            <person name="Liang X."/>
            <person name="Jin J."/>
            <person name="Gao L."/>
            <person name="Zheng W."/>
            <person name="Hao B."/>
            <person name="Liu S.-M."/>
            <person name="Wang W."/>
            <person name="Yuan L."/>
            <person name="Cao M."/>
            <person name="McDermott J."/>
            <person name="Samudrala R."/>
            <person name="Wang J."/>
            <person name="Wong G.K.-S."/>
            <person name="Yang H."/>
        </authorList>
    </citation>
    <scope>NUCLEOTIDE SEQUENCE [LARGE SCALE GENOMIC DNA]</scope>
    <source>
        <strain>cv. Nipponbare</strain>
    </source>
</reference>
<reference key="5">
    <citation type="journal article" date="2014" name="Curr. Opin. Plant Biol.">
        <title>Strigolactone signalling: standing on the shoulders of DWARFs.</title>
        <authorList>
            <person name="Bennett T."/>
            <person name="Leyser O."/>
        </authorList>
    </citation>
    <scope>REVIEW</scope>
</reference>
<accession>Q6Z517</accession>
<accession>A3BR72</accession>
<accession>Q0J6X5</accession>
<name>SMAX1_ORYSJ</name>
<dbReference type="EMBL" id="AP005161">
    <property type="protein sequence ID" value="BAD05509.1"/>
    <property type="molecule type" value="Genomic_DNA"/>
</dbReference>
<dbReference type="EMBL" id="AP008214">
    <property type="protein sequence ID" value="BAF23290.1"/>
    <property type="status" value="ALT_INIT"/>
    <property type="molecule type" value="Genomic_DNA"/>
</dbReference>
<dbReference type="EMBL" id="AP014964">
    <property type="protein sequence ID" value="BAT04561.1"/>
    <property type="status" value="ALT_INIT"/>
    <property type="molecule type" value="Genomic_DNA"/>
</dbReference>
<dbReference type="EMBL" id="CM000145">
    <property type="protein sequence ID" value="EAZ42061.1"/>
    <property type="status" value="ALT_SEQ"/>
    <property type="molecule type" value="Genomic_DNA"/>
</dbReference>
<dbReference type="RefSeq" id="XP_015650285.1">
    <property type="nucleotide sequence ID" value="XM_015794799.1"/>
</dbReference>
<dbReference type="SMR" id="Q6Z517"/>
<dbReference type="FunCoup" id="Q6Z517">
    <property type="interactions" value="1673"/>
</dbReference>
<dbReference type="STRING" id="39947.Q6Z517"/>
<dbReference type="PaxDb" id="39947-Q6Z517"/>
<dbReference type="EnsemblPlants" id="Os08t0250900-01">
    <property type="protein sequence ID" value="Os08t0250900-01"/>
    <property type="gene ID" value="Os08g0250900"/>
</dbReference>
<dbReference type="Gramene" id="Os08t0250900-01">
    <property type="protein sequence ID" value="Os08t0250900-01"/>
    <property type="gene ID" value="Os08g0250900"/>
</dbReference>
<dbReference type="KEGG" id="dosa:Os08g0250900"/>
<dbReference type="eggNOG" id="KOG1051">
    <property type="taxonomic scope" value="Eukaryota"/>
</dbReference>
<dbReference type="InParanoid" id="Q6Z517"/>
<dbReference type="OrthoDB" id="1929681at2759"/>
<dbReference type="Proteomes" id="UP000000763">
    <property type="component" value="Chromosome 8"/>
</dbReference>
<dbReference type="Proteomes" id="UP000007752">
    <property type="component" value="Chromosome 8"/>
</dbReference>
<dbReference type="Proteomes" id="UP000059680">
    <property type="component" value="Chromosome 8"/>
</dbReference>
<dbReference type="GO" id="GO:0005524">
    <property type="term" value="F:ATP binding"/>
    <property type="evidence" value="ECO:0007669"/>
    <property type="project" value="InterPro"/>
</dbReference>
<dbReference type="GO" id="GO:0016887">
    <property type="term" value="F:ATP hydrolysis activity"/>
    <property type="evidence" value="ECO:0007669"/>
    <property type="project" value="InterPro"/>
</dbReference>
<dbReference type="CDD" id="cd19499">
    <property type="entry name" value="RecA-like_ClpB_Hsp104-like"/>
    <property type="match status" value="1"/>
</dbReference>
<dbReference type="Gene3D" id="1.10.1780.10">
    <property type="entry name" value="Clp, N-terminal domain"/>
    <property type="match status" value="1"/>
</dbReference>
<dbReference type="Gene3D" id="3.40.50.300">
    <property type="entry name" value="P-loop containing nucleotide triphosphate hydrolases"/>
    <property type="match status" value="1"/>
</dbReference>
<dbReference type="InterPro" id="IPR003959">
    <property type="entry name" value="ATPase_AAA_core"/>
</dbReference>
<dbReference type="InterPro" id="IPR036628">
    <property type="entry name" value="Clp_N_dom_sf"/>
</dbReference>
<dbReference type="InterPro" id="IPR004176">
    <property type="entry name" value="Clp_R_dom"/>
</dbReference>
<dbReference type="InterPro" id="IPR027417">
    <property type="entry name" value="P-loop_NTPase"/>
</dbReference>
<dbReference type="InterPro" id="IPR051650">
    <property type="entry name" value="SL_signaling_regulator"/>
</dbReference>
<dbReference type="PANTHER" id="PTHR43572">
    <property type="entry name" value="CHAPERONE PROTEIN CLPD, CHLOROPLASTIC"/>
    <property type="match status" value="1"/>
</dbReference>
<dbReference type="PANTHER" id="PTHR43572:SF13">
    <property type="entry name" value="PROTEIN SUPPRESSOR OF MAX2 1"/>
    <property type="match status" value="1"/>
</dbReference>
<dbReference type="Pfam" id="PF07724">
    <property type="entry name" value="AAA_2"/>
    <property type="match status" value="1"/>
</dbReference>
<dbReference type="Pfam" id="PF02861">
    <property type="entry name" value="Clp_N"/>
    <property type="match status" value="2"/>
</dbReference>
<dbReference type="Pfam" id="PF23569">
    <property type="entry name" value="NBD_SMAX1"/>
    <property type="match status" value="1"/>
</dbReference>
<dbReference type="SUPFAM" id="SSF81923">
    <property type="entry name" value="Double Clp-N motif"/>
    <property type="match status" value="1"/>
</dbReference>
<dbReference type="SUPFAM" id="SSF52540">
    <property type="entry name" value="P-loop containing nucleoside triphosphate hydrolases"/>
    <property type="match status" value="1"/>
</dbReference>
<dbReference type="PROSITE" id="PS51903">
    <property type="entry name" value="CLP_R"/>
    <property type="match status" value="1"/>
</dbReference>
<gene>
    <name evidence="4" type="primary">SMAX1L</name>
    <name evidence="6" type="ordered locus">Os08g0250900</name>
    <name evidence="4" type="ordered locus">LOC_Os08g15230</name>
    <name evidence="5" type="ORF">OSJNBa0036E18.7</name>
    <name evidence="7" type="ORF">OSNPB_080250900</name>
</gene>
<feature type="chain" id="PRO_0000435825" description="Protein SMAX1-like">
    <location>
        <begin position="1"/>
        <end position="1041"/>
    </location>
</feature>
<feature type="domain" description="Clp R" evidence="2">
    <location>
        <begin position="8"/>
        <end position="188"/>
    </location>
</feature>
<feature type="region of interest" description="Repeat 1" evidence="2">
    <location>
        <begin position="12"/>
        <end position="98"/>
    </location>
</feature>
<feature type="region of interest" description="Repeat 2" evidence="2">
    <location>
        <begin position="117"/>
        <end position="188"/>
    </location>
</feature>
<feature type="region of interest" description="Disordered" evidence="3">
    <location>
        <begin position="189"/>
        <end position="214"/>
    </location>
</feature>
<feature type="region of interest" description="Disordered" evidence="3">
    <location>
        <begin position="482"/>
        <end position="513"/>
    </location>
</feature>
<feature type="region of interest" description="Disordered" evidence="3">
    <location>
        <begin position="889"/>
        <end position="913"/>
    </location>
</feature>
<feature type="compositionally biased region" description="Low complexity" evidence="3">
    <location>
        <begin position="189"/>
        <end position="205"/>
    </location>
</feature>
<feature type="compositionally biased region" description="Basic and acidic residues" evidence="3">
    <location>
        <begin position="482"/>
        <end position="495"/>
    </location>
</feature>
<feature type="compositionally biased region" description="Polar residues" evidence="3">
    <location>
        <begin position="891"/>
        <end position="900"/>
    </location>
</feature>